<accession>B2JES9</accession>
<proteinExistence type="inferred from homology"/>
<sequence length="301" mass="33471">MHIHPNFDPVAIHLGPLAVRWYGLMYLVAFIMAIVVGRLRLRLPHVAAQGWTPKDIDDMLFYGVLGTILGGRFGYVLFYKASWYFAHPLDVFKVWEGGMSFHGGFLGVTFAMILFAWQRKRTWLQVTDFVAPMVPAGLAAGRLGNFINGELWGRVTSPDAPWAMLFPGAANEDAGWLVTHPAQAAQWHLADVFAQYHMLPRHPSQLYEIALEGVVLFLVLWLFSRKPRPVGAASAVFLIGYGLARFTVEFAREPDDFLGLLALGLSMGQWLSLPMIIAGVVMLLWAYRRNGRSAAQAAGVS</sequence>
<protein>
    <recommendedName>
        <fullName evidence="1">Phosphatidylglycerol--prolipoprotein diacylglyceryl transferase</fullName>
        <ecNumber evidence="1">2.5.1.145</ecNumber>
    </recommendedName>
</protein>
<evidence type="ECO:0000255" key="1">
    <source>
        <dbReference type="HAMAP-Rule" id="MF_01147"/>
    </source>
</evidence>
<organism>
    <name type="scientific">Paraburkholderia phymatum (strain DSM 17167 / CIP 108236 / LMG 21445 / STM815)</name>
    <name type="common">Burkholderia phymatum</name>
    <dbReference type="NCBI Taxonomy" id="391038"/>
    <lineage>
        <taxon>Bacteria</taxon>
        <taxon>Pseudomonadati</taxon>
        <taxon>Pseudomonadota</taxon>
        <taxon>Betaproteobacteria</taxon>
        <taxon>Burkholderiales</taxon>
        <taxon>Burkholderiaceae</taxon>
        <taxon>Paraburkholderia</taxon>
    </lineage>
</organism>
<keyword id="KW-0997">Cell inner membrane</keyword>
<keyword id="KW-1003">Cell membrane</keyword>
<keyword id="KW-0472">Membrane</keyword>
<keyword id="KW-1185">Reference proteome</keyword>
<keyword id="KW-0808">Transferase</keyword>
<keyword id="KW-0812">Transmembrane</keyword>
<keyword id="KW-1133">Transmembrane helix</keyword>
<dbReference type="EC" id="2.5.1.145" evidence="1"/>
<dbReference type="EMBL" id="CP001043">
    <property type="protein sequence ID" value="ACC71394.1"/>
    <property type="molecule type" value="Genomic_DNA"/>
</dbReference>
<dbReference type="RefSeq" id="WP_012401600.1">
    <property type="nucleotide sequence ID" value="NC_010622.1"/>
</dbReference>
<dbReference type="SMR" id="B2JES9"/>
<dbReference type="STRING" id="391038.Bphy_2219"/>
<dbReference type="KEGG" id="bph:Bphy_2219"/>
<dbReference type="eggNOG" id="COG0682">
    <property type="taxonomic scope" value="Bacteria"/>
</dbReference>
<dbReference type="HOGENOM" id="CLU_013386_1_0_4"/>
<dbReference type="OrthoDB" id="871140at2"/>
<dbReference type="UniPathway" id="UPA00664"/>
<dbReference type="Proteomes" id="UP000001192">
    <property type="component" value="Chromosome 1"/>
</dbReference>
<dbReference type="GO" id="GO:0005886">
    <property type="term" value="C:plasma membrane"/>
    <property type="evidence" value="ECO:0007669"/>
    <property type="project" value="UniProtKB-SubCell"/>
</dbReference>
<dbReference type="GO" id="GO:0008961">
    <property type="term" value="F:phosphatidylglycerol-prolipoprotein diacylglyceryl transferase activity"/>
    <property type="evidence" value="ECO:0007669"/>
    <property type="project" value="UniProtKB-UniRule"/>
</dbReference>
<dbReference type="GO" id="GO:0042158">
    <property type="term" value="P:lipoprotein biosynthetic process"/>
    <property type="evidence" value="ECO:0007669"/>
    <property type="project" value="UniProtKB-UniRule"/>
</dbReference>
<dbReference type="HAMAP" id="MF_01147">
    <property type="entry name" value="Lgt"/>
    <property type="match status" value="1"/>
</dbReference>
<dbReference type="InterPro" id="IPR001640">
    <property type="entry name" value="Lgt"/>
</dbReference>
<dbReference type="NCBIfam" id="TIGR00544">
    <property type="entry name" value="lgt"/>
    <property type="match status" value="1"/>
</dbReference>
<dbReference type="PANTHER" id="PTHR30589:SF0">
    <property type="entry name" value="PHOSPHATIDYLGLYCEROL--PROLIPOPROTEIN DIACYLGLYCERYL TRANSFERASE"/>
    <property type="match status" value="1"/>
</dbReference>
<dbReference type="PANTHER" id="PTHR30589">
    <property type="entry name" value="PROLIPOPROTEIN DIACYLGLYCERYL TRANSFERASE"/>
    <property type="match status" value="1"/>
</dbReference>
<dbReference type="Pfam" id="PF01790">
    <property type="entry name" value="LGT"/>
    <property type="match status" value="1"/>
</dbReference>
<dbReference type="PROSITE" id="PS01311">
    <property type="entry name" value="LGT"/>
    <property type="match status" value="1"/>
</dbReference>
<comment type="function">
    <text evidence="1">Catalyzes the transfer of the diacylglyceryl group from phosphatidylglycerol to the sulfhydryl group of the N-terminal cysteine of a prolipoprotein, the first step in the formation of mature lipoproteins.</text>
</comment>
<comment type="catalytic activity">
    <reaction evidence="1">
        <text>L-cysteinyl-[prolipoprotein] + a 1,2-diacyl-sn-glycero-3-phospho-(1'-sn-glycerol) = an S-1,2-diacyl-sn-glyceryl-L-cysteinyl-[prolipoprotein] + sn-glycerol 1-phosphate + H(+)</text>
        <dbReference type="Rhea" id="RHEA:56712"/>
        <dbReference type="Rhea" id="RHEA-COMP:14679"/>
        <dbReference type="Rhea" id="RHEA-COMP:14680"/>
        <dbReference type="ChEBI" id="CHEBI:15378"/>
        <dbReference type="ChEBI" id="CHEBI:29950"/>
        <dbReference type="ChEBI" id="CHEBI:57685"/>
        <dbReference type="ChEBI" id="CHEBI:64716"/>
        <dbReference type="ChEBI" id="CHEBI:140658"/>
        <dbReference type="EC" id="2.5.1.145"/>
    </reaction>
</comment>
<comment type="pathway">
    <text evidence="1">Protein modification; lipoprotein biosynthesis (diacylglyceryl transfer).</text>
</comment>
<comment type="subcellular location">
    <subcellularLocation>
        <location evidence="1">Cell inner membrane</location>
        <topology evidence="1">Multi-pass membrane protein</topology>
    </subcellularLocation>
</comment>
<comment type="similarity">
    <text evidence="1">Belongs to the Lgt family.</text>
</comment>
<name>LGT_PARP8</name>
<reference key="1">
    <citation type="journal article" date="2014" name="Stand. Genomic Sci.">
        <title>Complete genome sequence of Burkholderia phymatum STM815(T), a broad host range and efficient nitrogen-fixing symbiont of Mimosa species.</title>
        <authorList>
            <person name="Moulin L."/>
            <person name="Klonowska A."/>
            <person name="Caroline B."/>
            <person name="Booth K."/>
            <person name="Vriezen J.A."/>
            <person name="Melkonian R."/>
            <person name="James E.K."/>
            <person name="Young J.P."/>
            <person name="Bena G."/>
            <person name="Hauser L."/>
            <person name="Land M."/>
            <person name="Kyrpides N."/>
            <person name="Bruce D."/>
            <person name="Chain P."/>
            <person name="Copeland A."/>
            <person name="Pitluck S."/>
            <person name="Woyke T."/>
            <person name="Lizotte-Waniewski M."/>
            <person name="Bristow J."/>
            <person name="Riley M."/>
        </authorList>
    </citation>
    <scope>NUCLEOTIDE SEQUENCE [LARGE SCALE GENOMIC DNA]</scope>
    <source>
        <strain>DSM 17167 / CIP 108236 / LMG 21445 / STM815</strain>
    </source>
</reference>
<feature type="chain" id="PRO_1000137411" description="Phosphatidylglycerol--prolipoprotein diacylglyceryl transferase">
    <location>
        <begin position="1"/>
        <end position="301"/>
    </location>
</feature>
<feature type="transmembrane region" description="Helical" evidence="1">
    <location>
        <begin position="17"/>
        <end position="37"/>
    </location>
</feature>
<feature type="transmembrane region" description="Helical" evidence="1">
    <location>
        <begin position="59"/>
        <end position="79"/>
    </location>
</feature>
<feature type="transmembrane region" description="Helical" evidence="1">
    <location>
        <begin position="97"/>
        <end position="117"/>
    </location>
</feature>
<feature type="transmembrane region" description="Helical" evidence="1">
    <location>
        <begin position="129"/>
        <end position="149"/>
    </location>
</feature>
<feature type="transmembrane region" description="Helical" evidence="1">
    <location>
        <begin position="203"/>
        <end position="223"/>
    </location>
</feature>
<feature type="transmembrane region" description="Helical" evidence="1">
    <location>
        <begin position="230"/>
        <end position="250"/>
    </location>
</feature>
<feature type="transmembrane region" description="Helical" evidence="1">
    <location>
        <begin position="257"/>
        <end position="277"/>
    </location>
</feature>
<feature type="binding site" evidence="1">
    <location>
        <position position="142"/>
    </location>
    <ligand>
        <name>a 1,2-diacyl-sn-glycero-3-phospho-(1'-sn-glycerol)</name>
        <dbReference type="ChEBI" id="CHEBI:64716"/>
    </ligand>
</feature>
<gene>
    <name evidence="1" type="primary">lgt</name>
    <name type="ordered locus">Bphy_2219</name>
</gene>